<accession>P65113</accession>
<accession>Q9JR12</accession>
<feature type="chain" id="PRO_0000095833" description="Translation initiation factor IF-1">
    <location>
        <begin position="1"/>
        <end position="72"/>
    </location>
</feature>
<feature type="domain" description="S1-like" evidence="1">
    <location>
        <begin position="1"/>
        <end position="72"/>
    </location>
</feature>
<dbReference type="EMBL" id="AE002098">
    <property type="protein sequence ID" value="AAF40621.1"/>
    <property type="molecule type" value="Genomic_DNA"/>
</dbReference>
<dbReference type="PIR" id="E81233">
    <property type="entry name" value="E81233"/>
</dbReference>
<dbReference type="RefSeq" id="NP_273221.1">
    <property type="nucleotide sequence ID" value="NC_003112.2"/>
</dbReference>
<dbReference type="RefSeq" id="WP_002215452.1">
    <property type="nucleotide sequence ID" value="NC_003112.2"/>
</dbReference>
<dbReference type="SMR" id="P65113"/>
<dbReference type="FunCoup" id="P65113">
    <property type="interactions" value="413"/>
</dbReference>
<dbReference type="STRING" id="122586.NMB0163"/>
<dbReference type="PaxDb" id="122586-NMB0163"/>
<dbReference type="GeneID" id="93387238"/>
<dbReference type="KEGG" id="nme:NMB0163"/>
<dbReference type="PATRIC" id="fig|122586.8.peg.204"/>
<dbReference type="HOGENOM" id="CLU_151267_1_0_4"/>
<dbReference type="InParanoid" id="P65113"/>
<dbReference type="OrthoDB" id="9803250at2"/>
<dbReference type="PRO" id="PR:P65113"/>
<dbReference type="Proteomes" id="UP000000425">
    <property type="component" value="Chromosome"/>
</dbReference>
<dbReference type="GO" id="GO:0005829">
    <property type="term" value="C:cytosol"/>
    <property type="evidence" value="ECO:0000318"/>
    <property type="project" value="GO_Central"/>
</dbReference>
<dbReference type="GO" id="GO:0043022">
    <property type="term" value="F:ribosome binding"/>
    <property type="evidence" value="ECO:0000318"/>
    <property type="project" value="GO_Central"/>
</dbReference>
<dbReference type="GO" id="GO:0019843">
    <property type="term" value="F:rRNA binding"/>
    <property type="evidence" value="ECO:0007669"/>
    <property type="project" value="UniProtKB-UniRule"/>
</dbReference>
<dbReference type="GO" id="GO:0003743">
    <property type="term" value="F:translation initiation factor activity"/>
    <property type="evidence" value="ECO:0007669"/>
    <property type="project" value="UniProtKB-UniRule"/>
</dbReference>
<dbReference type="CDD" id="cd04451">
    <property type="entry name" value="S1_IF1"/>
    <property type="match status" value="1"/>
</dbReference>
<dbReference type="FunFam" id="2.40.50.140:FF:000002">
    <property type="entry name" value="Translation initiation factor IF-1"/>
    <property type="match status" value="1"/>
</dbReference>
<dbReference type="Gene3D" id="2.40.50.140">
    <property type="entry name" value="Nucleic acid-binding proteins"/>
    <property type="match status" value="1"/>
</dbReference>
<dbReference type="HAMAP" id="MF_00075">
    <property type="entry name" value="IF_1"/>
    <property type="match status" value="1"/>
</dbReference>
<dbReference type="InterPro" id="IPR012340">
    <property type="entry name" value="NA-bd_OB-fold"/>
</dbReference>
<dbReference type="InterPro" id="IPR006196">
    <property type="entry name" value="RNA-binding_domain_S1_IF1"/>
</dbReference>
<dbReference type="InterPro" id="IPR004368">
    <property type="entry name" value="TIF_IF1"/>
</dbReference>
<dbReference type="NCBIfam" id="TIGR00008">
    <property type="entry name" value="infA"/>
    <property type="match status" value="1"/>
</dbReference>
<dbReference type="PANTHER" id="PTHR33370">
    <property type="entry name" value="TRANSLATION INITIATION FACTOR IF-1, CHLOROPLASTIC"/>
    <property type="match status" value="1"/>
</dbReference>
<dbReference type="PANTHER" id="PTHR33370:SF1">
    <property type="entry name" value="TRANSLATION INITIATION FACTOR IF-1, CHLOROPLASTIC"/>
    <property type="match status" value="1"/>
</dbReference>
<dbReference type="Pfam" id="PF01176">
    <property type="entry name" value="eIF-1a"/>
    <property type="match status" value="1"/>
</dbReference>
<dbReference type="SUPFAM" id="SSF50249">
    <property type="entry name" value="Nucleic acid-binding proteins"/>
    <property type="match status" value="1"/>
</dbReference>
<dbReference type="PROSITE" id="PS50832">
    <property type="entry name" value="S1_IF1_TYPE"/>
    <property type="match status" value="1"/>
</dbReference>
<name>IF1_NEIMB</name>
<reference key="1">
    <citation type="journal article" date="2000" name="Science">
        <title>Complete genome sequence of Neisseria meningitidis serogroup B strain MC58.</title>
        <authorList>
            <person name="Tettelin H."/>
            <person name="Saunders N.J."/>
            <person name="Heidelberg J.F."/>
            <person name="Jeffries A.C."/>
            <person name="Nelson K.E."/>
            <person name="Eisen J.A."/>
            <person name="Ketchum K.A."/>
            <person name="Hood D.W."/>
            <person name="Peden J.F."/>
            <person name="Dodson R.J."/>
            <person name="Nelson W.C."/>
            <person name="Gwinn M.L."/>
            <person name="DeBoy R.T."/>
            <person name="Peterson J.D."/>
            <person name="Hickey E.K."/>
            <person name="Haft D.H."/>
            <person name="Salzberg S.L."/>
            <person name="White O."/>
            <person name="Fleischmann R.D."/>
            <person name="Dougherty B.A."/>
            <person name="Mason T.M."/>
            <person name="Ciecko A."/>
            <person name="Parksey D.S."/>
            <person name="Blair E."/>
            <person name="Cittone H."/>
            <person name="Clark E.B."/>
            <person name="Cotton M.D."/>
            <person name="Utterback T.R."/>
            <person name="Khouri H.M."/>
            <person name="Qin H."/>
            <person name="Vamathevan J.J."/>
            <person name="Gill J."/>
            <person name="Scarlato V."/>
            <person name="Masignani V."/>
            <person name="Pizza M."/>
            <person name="Grandi G."/>
            <person name="Sun L."/>
            <person name="Smith H.O."/>
            <person name="Fraser C.M."/>
            <person name="Moxon E.R."/>
            <person name="Rappuoli R."/>
            <person name="Venter J.C."/>
        </authorList>
    </citation>
    <scope>NUCLEOTIDE SEQUENCE [LARGE SCALE GENOMIC DNA]</scope>
    <source>
        <strain>ATCC BAA-335 / MC58</strain>
    </source>
</reference>
<evidence type="ECO:0000255" key="1">
    <source>
        <dbReference type="HAMAP-Rule" id="MF_00075"/>
    </source>
</evidence>
<organism>
    <name type="scientific">Neisseria meningitidis serogroup B (strain ATCC BAA-335 / MC58)</name>
    <dbReference type="NCBI Taxonomy" id="122586"/>
    <lineage>
        <taxon>Bacteria</taxon>
        <taxon>Pseudomonadati</taxon>
        <taxon>Pseudomonadota</taxon>
        <taxon>Betaproteobacteria</taxon>
        <taxon>Neisseriales</taxon>
        <taxon>Neisseriaceae</taxon>
        <taxon>Neisseria</taxon>
    </lineage>
</organism>
<proteinExistence type="inferred from homology"/>
<keyword id="KW-0963">Cytoplasm</keyword>
<keyword id="KW-0396">Initiation factor</keyword>
<keyword id="KW-0648">Protein biosynthesis</keyword>
<keyword id="KW-1185">Reference proteome</keyword>
<keyword id="KW-0694">RNA-binding</keyword>
<keyword id="KW-0699">rRNA-binding</keyword>
<protein>
    <recommendedName>
        <fullName evidence="1">Translation initiation factor IF-1</fullName>
    </recommendedName>
</protein>
<gene>
    <name evidence="1" type="primary">infA</name>
    <name type="ordered locus">NMB0163</name>
</gene>
<comment type="function">
    <text evidence="1">One of the essential components for the initiation of protein synthesis. Stabilizes the binding of IF-2 and IF-3 on the 30S subunit to which N-formylmethionyl-tRNA(fMet) subsequently binds. Helps modulate mRNA selection, yielding the 30S pre-initiation complex (PIC). Upon addition of the 50S ribosomal subunit IF-1, IF-2 and IF-3 are released leaving the mature 70S translation initiation complex.</text>
</comment>
<comment type="subunit">
    <text evidence="1">Component of the 30S ribosomal translation pre-initiation complex which assembles on the 30S ribosome in the order IF-2 and IF-3, IF-1 and N-formylmethionyl-tRNA(fMet); mRNA recruitment can occur at any time during PIC assembly.</text>
</comment>
<comment type="subcellular location">
    <subcellularLocation>
        <location evidence="1">Cytoplasm</location>
    </subcellularLocation>
</comment>
<comment type="similarity">
    <text evidence="1">Belongs to the IF-1 family.</text>
</comment>
<sequence length="72" mass="8295">MAKEDTIQMQGEILETLPNATFKVKLENDHIVLGHISGKMRMHYIRISPGDKVTVELTPYDLTRARIVFRAR</sequence>